<accession>C0HKK3</accession>
<reference evidence="4" key="1">
    <citation type="journal article" date="2017" name="J. Nat. Prod.">
        <title>Understanding the Diversity and Distribution of Cyclotides from Plants of Varied Genetic Origin.</title>
        <authorList>
            <person name="Ravipati A.S."/>
            <person name="Poth A.G."/>
            <person name="Troeira Henriques S."/>
            <person name="Bhandari M."/>
            <person name="Huang Y.H."/>
            <person name="Nino J."/>
            <person name="Colgrave M.L."/>
            <person name="Craik D.J."/>
        </authorList>
    </citation>
    <scope>PROTEIN SEQUENCE</scope>
</reference>
<proteinExistence type="evidence at protein level"/>
<organism evidence="3">
    <name type="scientific">Viola pubescens</name>
    <name type="common">Downy yellow violet</name>
    <dbReference type="NCBI Taxonomy" id="97445"/>
    <lineage>
        <taxon>Eukaryota</taxon>
        <taxon>Viridiplantae</taxon>
        <taxon>Streptophyta</taxon>
        <taxon>Embryophyta</taxon>
        <taxon>Tracheophyta</taxon>
        <taxon>Spermatophyta</taxon>
        <taxon>Magnoliopsida</taxon>
        <taxon>eudicotyledons</taxon>
        <taxon>Gunneridae</taxon>
        <taxon>Pentapetalae</taxon>
        <taxon>rosids</taxon>
        <taxon>fabids</taxon>
        <taxon>Malpighiales</taxon>
        <taxon>Violaceae</taxon>
        <taxon>Viola</taxon>
        <taxon>Viola subgen. Viola</taxon>
        <taxon>Viola sect. Chamaemelanium</taxon>
    </lineage>
</organism>
<evidence type="ECO:0000255" key="1">
    <source>
        <dbReference type="PROSITE-ProRule" id="PRU00395"/>
    </source>
</evidence>
<evidence type="ECO:0000269" key="2">
    <source>
    </source>
</evidence>
<evidence type="ECO:0000303" key="3">
    <source>
    </source>
</evidence>
<evidence type="ECO:0000305" key="4"/>
<protein>
    <recommendedName>
        <fullName evidence="3">Cyclotide vpub-A</fullName>
    </recommendedName>
</protein>
<keyword id="KW-0903">Direct protein sequencing</keyword>
<keyword id="KW-1015">Disulfide bond</keyword>
<keyword id="KW-0611">Plant defense</keyword>
<feature type="peptide" id="PRO_0000441370" description="Cyclotide vpub-A" evidence="2">
    <location>
        <begin position="1"/>
        <end position="31"/>
    </location>
</feature>
<feature type="disulfide bond" evidence="1">
    <location>
        <begin position="5"/>
        <end position="21"/>
    </location>
</feature>
<feature type="disulfide bond" evidence="1">
    <location>
        <begin position="9"/>
        <end position="23"/>
    </location>
</feature>
<feature type="disulfide bond" evidence="1">
    <location>
        <begin position="14"/>
        <end position="28"/>
    </location>
</feature>
<feature type="cross-link" description="Cyclopeptide (Gly-Asn)" evidence="3">
    <location>
        <begin position="1"/>
        <end position="31"/>
    </location>
</feature>
<dbReference type="SMR" id="C0HKK3"/>
<dbReference type="GO" id="GO:0006952">
    <property type="term" value="P:defense response"/>
    <property type="evidence" value="ECO:0007669"/>
    <property type="project" value="UniProtKB-KW"/>
</dbReference>
<dbReference type="InterPro" id="IPR005535">
    <property type="entry name" value="Cyclotide"/>
</dbReference>
<dbReference type="InterPro" id="IPR012323">
    <property type="entry name" value="Cyclotide_bracelet_CS"/>
</dbReference>
<dbReference type="InterPro" id="IPR036146">
    <property type="entry name" value="Cyclotide_sf"/>
</dbReference>
<dbReference type="Pfam" id="PF03784">
    <property type="entry name" value="Cyclotide"/>
    <property type="match status" value="1"/>
</dbReference>
<dbReference type="PIRSF" id="PIRSF037891">
    <property type="entry name" value="Cycloviolacin"/>
    <property type="match status" value="1"/>
</dbReference>
<dbReference type="SUPFAM" id="SSF57038">
    <property type="entry name" value="Cyclotides"/>
    <property type="match status" value="1"/>
</dbReference>
<dbReference type="PROSITE" id="PS51052">
    <property type="entry name" value="CYCLOTIDE"/>
    <property type="match status" value="1"/>
</dbReference>
<dbReference type="PROSITE" id="PS60008">
    <property type="entry name" value="CYCLOTIDE_BRACELET"/>
    <property type="match status" value="1"/>
</dbReference>
<comment type="function">
    <text evidence="1">Probably participates in a plant defense mechanism.</text>
</comment>
<comment type="domain">
    <text evidence="4">The presence of a 'disulfide through disulfide knot' structurally defines this protein as a knottin.</text>
</comment>
<comment type="PTM">
    <text evidence="1">This is a cyclic peptide.</text>
</comment>
<comment type="similarity">
    <text evidence="1">Belongs to the cyclotide family. Bracelet subfamily.</text>
</comment>
<comment type="caution">
    <text evidence="1">This peptide is cyclic. The start position was chosen by similarity to Oak1 (kalata B1) for which the DNA sequence is known.</text>
</comment>
<name>CYVUA_VIOPU</name>
<sequence length="31" mass="3237">GVIPCGESCVFIPCISAVIGCSCKSKVCYRN</sequence>